<organism>
    <name type="scientific">Halalkalibacterium halodurans (strain ATCC BAA-125 / DSM 18197 / FERM 7344 / JCM 9153 / C-125)</name>
    <name type="common">Bacillus halodurans</name>
    <dbReference type="NCBI Taxonomy" id="272558"/>
    <lineage>
        <taxon>Bacteria</taxon>
        <taxon>Bacillati</taxon>
        <taxon>Bacillota</taxon>
        <taxon>Bacilli</taxon>
        <taxon>Bacillales</taxon>
        <taxon>Bacillaceae</taxon>
        <taxon>Halalkalibacterium (ex Joshi et al. 2022)</taxon>
    </lineage>
</organism>
<proteinExistence type="inferred from homology"/>
<name>GLPK_HALH5</name>
<comment type="function">
    <text evidence="1">Key enzyme in the regulation of glycerol uptake and metabolism. Catalyzes the phosphorylation of glycerol to yield sn-glycerol 3-phosphate.</text>
</comment>
<comment type="catalytic activity">
    <reaction evidence="1">
        <text>glycerol + ATP = sn-glycerol 3-phosphate + ADP + H(+)</text>
        <dbReference type="Rhea" id="RHEA:21644"/>
        <dbReference type="ChEBI" id="CHEBI:15378"/>
        <dbReference type="ChEBI" id="CHEBI:17754"/>
        <dbReference type="ChEBI" id="CHEBI:30616"/>
        <dbReference type="ChEBI" id="CHEBI:57597"/>
        <dbReference type="ChEBI" id="CHEBI:456216"/>
        <dbReference type="EC" id="2.7.1.30"/>
    </reaction>
</comment>
<comment type="activity regulation">
    <text evidence="1">Activated by phosphorylation and inhibited by fructose 1,6-bisphosphate (FBP).</text>
</comment>
<comment type="pathway">
    <text evidence="1">Polyol metabolism; glycerol degradation via glycerol kinase pathway; sn-glycerol 3-phosphate from glycerol: step 1/1.</text>
</comment>
<comment type="subunit">
    <text evidence="1">Homotetramer and homodimer (in equilibrium).</text>
</comment>
<comment type="PTM">
    <text evidence="1">The phosphoenolpyruvate-dependent sugar phosphotransferase system (PTS), including enzyme I, and histidine-containing protein (HPr) are required for the phosphorylation, which leads to the activation of the enzyme.</text>
</comment>
<comment type="similarity">
    <text evidence="1">Belongs to the FGGY kinase family.</text>
</comment>
<evidence type="ECO:0000255" key="1">
    <source>
        <dbReference type="HAMAP-Rule" id="MF_00186"/>
    </source>
</evidence>
<feature type="chain" id="PRO_0000059433" description="Glycerol kinase">
    <location>
        <begin position="1"/>
        <end position="497"/>
    </location>
</feature>
<feature type="binding site" evidence="1">
    <location>
        <position position="13"/>
    </location>
    <ligand>
        <name>ADP</name>
        <dbReference type="ChEBI" id="CHEBI:456216"/>
    </ligand>
</feature>
<feature type="binding site" evidence="1">
    <location>
        <position position="13"/>
    </location>
    <ligand>
        <name>ATP</name>
        <dbReference type="ChEBI" id="CHEBI:30616"/>
    </ligand>
</feature>
<feature type="binding site" evidence="1">
    <location>
        <position position="13"/>
    </location>
    <ligand>
        <name>sn-glycerol 3-phosphate</name>
        <dbReference type="ChEBI" id="CHEBI:57597"/>
    </ligand>
</feature>
<feature type="binding site" evidence="1">
    <location>
        <position position="14"/>
    </location>
    <ligand>
        <name>ATP</name>
        <dbReference type="ChEBI" id="CHEBI:30616"/>
    </ligand>
</feature>
<feature type="binding site" evidence="1">
    <location>
        <position position="15"/>
    </location>
    <ligand>
        <name>ATP</name>
        <dbReference type="ChEBI" id="CHEBI:30616"/>
    </ligand>
</feature>
<feature type="binding site" evidence="1">
    <location>
        <position position="17"/>
    </location>
    <ligand>
        <name>ADP</name>
        <dbReference type="ChEBI" id="CHEBI:456216"/>
    </ligand>
</feature>
<feature type="binding site" evidence="1">
    <location>
        <position position="83"/>
    </location>
    <ligand>
        <name>glycerol</name>
        <dbReference type="ChEBI" id="CHEBI:17754"/>
    </ligand>
</feature>
<feature type="binding site" evidence="1">
    <location>
        <position position="83"/>
    </location>
    <ligand>
        <name>sn-glycerol 3-phosphate</name>
        <dbReference type="ChEBI" id="CHEBI:57597"/>
    </ligand>
</feature>
<feature type="binding site" evidence="1">
    <location>
        <position position="84"/>
    </location>
    <ligand>
        <name>glycerol</name>
        <dbReference type="ChEBI" id="CHEBI:17754"/>
    </ligand>
</feature>
<feature type="binding site" evidence="1">
    <location>
        <position position="84"/>
    </location>
    <ligand>
        <name>sn-glycerol 3-phosphate</name>
        <dbReference type="ChEBI" id="CHEBI:57597"/>
    </ligand>
</feature>
<feature type="binding site" evidence="1">
    <location>
        <position position="135"/>
    </location>
    <ligand>
        <name>glycerol</name>
        <dbReference type="ChEBI" id="CHEBI:17754"/>
    </ligand>
</feature>
<feature type="binding site" evidence="1">
    <location>
        <position position="135"/>
    </location>
    <ligand>
        <name>sn-glycerol 3-phosphate</name>
        <dbReference type="ChEBI" id="CHEBI:57597"/>
    </ligand>
</feature>
<feature type="binding site" evidence="1">
    <location>
        <position position="245"/>
    </location>
    <ligand>
        <name>glycerol</name>
        <dbReference type="ChEBI" id="CHEBI:17754"/>
    </ligand>
</feature>
<feature type="binding site" evidence="1">
    <location>
        <position position="245"/>
    </location>
    <ligand>
        <name>sn-glycerol 3-phosphate</name>
        <dbReference type="ChEBI" id="CHEBI:57597"/>
    </ligand>
</feature>
<feature type="binding site" evidence="1">
    <location>
        <position position="246"/>
    </location>
    <ligand>
        <name>glycerol</name>
        <dbReference type="ChEBI" id="CHEBI:17754"/>
    </ligand>
</feature>
<feature type="binding site" evidence="1">
    <location>
        <position position="267"/>
    </location>
    <ligand>
        <name>ADP</name>
        <dbReference type="ChEBI" id="CHEBI:456216"/>
    </ligand>
</feature>
<feature type="binding site" evidence="1">
    <location>
        <position position="267"/>
    </location>
    <ligand>
        <name>ATP</name>
        <dbReference type="ChEBI" id="CHEBI:30616"/>
    </ligand>
</feature>
<feature type="binding site" evidence="1">
    <location>
        <position position="310"/>
    </location>
    <ligand>
        <name>ADP</name>
        <dbReference type="ChEBI" id="CHEBI:456216"/>
    </ligand>
</feature>
<feature type="binding site" evidence="1">
    <location>
        <position position="310"/>
    </location>
    <ligand>
        <name>ATP</name>
        <dbReference type="ChEBI" id="CHEBI:30616"/>
    </ligand>
</feature>
<feature type="binding site" evidence="1">
    <location>
        <position position="314"/>
    </location>
    <ligand>
        <name>ATP</name>
        <dbReference type="ChEBI" id="CHEBI:30616"/>
    </ligand>
</feature>
<feature type="binding site" evidence="1">
    <location>
        <position position="411"/>
    </location>
    <ligand>
        <name>ADP</name>
        <dbReference type="ChEBI" id="CHEBI:456216"/>
    </ligand>
</feature>
<feature type="binding site" evidence="1">
    <location>
        <position position="411"/>
    </location>
    <ligand>
        <name>ATP</name>
        <dbReference type="ChEBI" id="CHEBI:30616"/>
    </ligand>
</feature>
<feature type="binding site" evidence="1">
    <location>
        <position position="415"/>
    </location>
    <ligand>
        <name>ADP</name>
        <dbReference type="ChEBI" id="CHEBI:456216"/>
    </ligand>
</feature>
<feature type="modified residue" description="Phosphohistidine; by HPr" evidence="1">
    <location>
        <position position="231"/>
    </location>
</feature>
<dbReference type="EC" id="2.7.1.30" evidence="1"/>
<dbReference type="EMBL" id="BA000004">
    <property type="protein sequence ID" value="BAB04812.1"/>
    <property type="molecule type" value="Genomic_DNA"/>
</dbReference>
<dbReference type="PIR" id="E83786">
    <property type="entry name" value="E83786"/>
</dbReference>
<dbReference type="RefSeq" id="WP_010897263.1">
    <property type="nucleotide sequence ID" value="NC_002570.2"/>
</dbReference>
<dbReference type="SMR" id="Q9KDW8"/>
<dbReference type="STRING" id="272558.gene:10726987"/>
<dbReference type="KEGG" id="bha:BH1093"/>
<dbReference type="eggNOG" id="COG0554">
    <property type="taxonomic scope" value="Bacteria"/>
</dbReference>
<dbReference type="HOGENOM" id="CLU_009281_2_3_9"/>
<dbReference type="OrthoDB" id="9805576at2"/>
<dbReference type="UniPathway" id="UPA00618">
    <property type="reaction ID" value="UER00672"/>
</dbReference>
<dbReference type="Proteomes" id="UP000001258">
    <property type="component" value="Chromosome"/>
</dbReference>
<dbReference type="GO" id="GO:0005829">
    <property type="term" value="C:cytosol"/>
    <property type="evidence" value="ECO:0007669"/>
    <property type="project" value="TreeGrafter"/>
</dbReference>
<dbReference type="GO" id="GO:0005524">
    <property type="term" value="F:ATP binding"/>
    <property type="evidence" value="ECO:0007669"/>
    <property type="project" value="UniProtKB-UniRule"/>
</dbReference>
<dbReference type="GO" id="GO:0004370">
    <property type="term" value="F:glycerol kinase activity"/>
    <property type="evidence" value="ECO:0000250"/>
    <property type="project" value="UniProtKB"/>
</dbReference>
<dbReference type="GO" id="GO:0019563">
    <property type="term" value="P:glycerol catabolic process"/>
    <property type="evidence" value="ECO:0007669"/>
    <property type="project" value="UniProtKB-UniRule"/>
</dbReference>
<dbReference type="GO" id="GO:0006071">
    <property type="term" value="P:glycerol metabolic process"/>
    <property type="evidence" value="ECO:0000250"/>
    <property type="project" value="UniProtKB"/>
</dbReference>
<dbReference type="GO" id="GO:0006072">
    <property type="term" value="P:glycerol-3-phosphate metabolic process"/>
    <property type="evidence" value="ECO:0007669"/>
    <property type="project" value="InterPro"/>
</dbReference>
<dbReference type="CDD" id="cd07786">
    <property type="entry name" value="FGGY_EcGK_like"/>
    <property type="match status" value="1"/>
</dbReference>
<dbReference type="FunFam" id="3.30.420.40:FF:000007">
    <property type="entry name" value="Glycerol kinase"/>
    <property type="match status" value="1"/>
</dbReference>
<dbReference type="FunFam" id="3.30.420.40:FF:000008">
    <property type="entry name" value="Glycerol kinase"/>
    <property type="match status" value="1"/>
</dbReference>
<dbReference type="Gene3D" id="3.30.420.40">
    <property type="match status" value="2"/>
</dbReference>
<dbReference type="HAMAP" id="MF_00186">
    <property type="entry name" value="Glycerol_kin"/>
    <property type="match status" value="1"/>
</dbReference>
<dbReference type="InterPro" id="IPR043129">
    <property type="entry name" value="ATPase_NBD"/>
</dbReference>
<dbReference type="InterPro" id="IPR000577">
    <property type="entry name" value="Carb_kinase_FGGY"/>
</dbReference>
<dbReference type="InterPro" id="IPR018483">
    <property type="entry name" value="Carb_kinase_FGGY_CS"/>
</dbReference>
<dbReference type="InterPro" id="IPR018485">
    <property type="entry name" value="FGGY_C"/>
</dbReference>
<dbReference type="InterPro" id="IPR018484">
    <property type="entry name" value="FGGY_N"/>
</dbReference>
<dbReference type="InterPro" id="IPR005999">
    <property type="entry name" value="Glycerol_kin"/>
</dbReference>
<dbReference type="NCBIfam" id="TIGR01311">
    <property type="entry name" value="glycerol_kin"/>
    <property type="match status" value="1"/>
</dbReference>
<dbReference type="NCBIfam" id="NF000756">
    <property type="entry name" value="PRK00047.1"/>
    <property type="match status" value="1"/>
</dbReference>
<dbReference type="PANTHER" id="PTHR10196:SF69">
    <property type="entry name" value="GLYCEROL KINASE"/>
    <property type="match status" value="1"/>
</dbReference>
<dbReference type="PANTHER" id="PTHR10196">
    <property type="entry name" value="SUGAR KINASE"/>
    <property type="match status" value="1"/>
</dbReference>
<dbReference type="Pfam" id="PF02782">
    <property type="entry name" value="FGGY_C"/>
    <property type="match status" value="1"/>
</dbReference>
<dbReference type="Pfam" id="PF00370">
    <property type="entry name" value="FGGY_N"/>
    <property type="match status" value="1"/>
</dbReference>
<dbReference type="PIRSF" id="PIRSF000538">
    <property type="entry name" value="GlpK"/>
    <property type="match status" value="1"/>
</dbReference>
<dbReference type="SUPFAM" id="SSF53067">
    <property type="entry name" value="Actin-like ATPase domain"/>
    <property type="match status" value="2"/>
</dbReference>
<dbReference type="PROSITE" id="PS00933">
    <property type="entry name" value="FGGY_KINASES_1"/>
    <property type="match status" value="1"/>
</dbReference>
<dbReference type="PROSITE" id="PS00445">
    <property type="entry name" value="FGGY_KINASES_2"/>
    <property type="match status" value="1"/>
</dbReference>
<reference key="1">
    <citation type="journal article" date="2000" name="Nucleic Acids Res.">
        <title>Complete genome sequence of the alkaliphilic bacterium Bacillus halodurans and genomic sequence comparison with Bacillus subtilis.</title>
        <authorList>
            <person name="Takami H."/>
            <person name="Nakasone K."/>
            <person name="Takaki Y."/>
            <person name="Maeno G."/>
            <person name="Sasaki R."/>
            <person name="Masui N."/>
            <person name="Fuji F."/>
            <person name="Hirama C."/>
            <person name="Nakamura Y."/>
            <person name="Ogasawara N."/>
            <person name="Kuhara S."/>
            <person name="Horikoshi K."/>
        </authorList>
    </citation>
    <scope>NUCLEOTIDE SEQUENCE [LARGE SCALE GENOMIC DNA]</scope>
    <source>
        <strain>ATCC BAA-125 / DSM 18197 / FERM 7344 / JCM 9153 / C-125</strain>
    </source>
</reference>
<protein>
    <recommendedName>
        <fullName evidence="1">Glycerol kinase</fullName>
        <ecNumber evidence="1">2.7.1.30</ecNumber>
    </recommendedName>
    <alternativeName>
        <fullName evidence="1">ATP:glycerol 3-phosphotransferase</fullName>
    </alternativeName>
    <alternativeName>
        <fullName evidence="1">Glycerokinase</fullName>
        <shortName evidence="1">GK</shortName>
    </alternativeName>
</protein>
<sequence length="497" mass="54856">MTKKYILALDQGTTSSRAILFNEAGEIIGIEQKEFQQIFPKPGWVEHDANEIWASVLSVIAGVLLKTNVEAKEIAAIGITNQRETAVVWEKESGRPIYNALVWQSRQTAGICERLRAEGFSEMVTEKTGLLIDPYFSGTKVRWILDHVDGAQERAERGELLFGTIDTWLIWKLSGGKAHVTDYSNASRTLLYNIYEQCWDDELLKMLNVPRAMLPDVRPSSEVYAETVSYHFFGEEIPIAGAAGDQQAALFGQACFEKGMAKNTYGTGCFMLMNTGNQGVKSKHGLLTTIAWGLDGKVEYALEGSIFVAGSAIQWLRDGLRMMKSAKESEGYATKVTSADGVYVVPAFVGLGTPYWDSDVRGAVFGLTRGTSKEHFIRATLESLAYQTKDVLQAMEADSGISLKTLRVDGGAVANNFLMQFQSDLLGVSVERPTVQETTALGAAYLAGLAVGFWTSKEEITNNWNLEQKFSAEMEETDRAKLYEGWQKAVRAAQAFK</sequence>
<accession>Q9KDW8</accession>
<keyword id="KW-0067">ATP-binding</keyword>
<keyword id="KW-0319">Glycerol metabolism</keyword>
<keyword id="KW-0418">Kinase</keyword>
<keyword id="KW-0547">Nucleotide-binding</keyword>
<keyword id="KW-0597">Phosphoprotein</keyword>
<keyword id="KW-1185">Reference proteome</keyword>
<keyword id="KW-0808">Transferase</keyword>
<gene>
    <name evidence="1" type="primary">glpK</name>
    <name type="ordered locus">BH1093</name>
</gene>